<protein>
    <recommendedName>
        <fullName evidence="1">UDP-N-acetylmuramate--L-alanine ligase</fullName>
        <ecNumber evidence="1">6.3.2.8</ecNumber>
    </recommendedName>
    <alternativeName>
        <fullName evidence="1">UDP-N-acetylmuramoyl-L-alanine synthetase</fullName>
    </alternativeName>
</protein>
<comment type="function">
    <text evidence="1">Cell wall formation.</text>
</comment>
<comment type="catalytic activity">
    <reaction evidence="1">
        <text>UDP-N-acetyl-alpha-D-muramate + L-alanine + ATP = UDP-N-acetyl-alpha-D-muramoyl-L-alanine + ADP + phosphate + H(+)</text>
        <dbReference type="Rhea" id="RHEA:23372"/>
        <dbReference type="ChEBI" id="CHEBI:15378"/>
        <dbReference type="ChEBI" id="CHEBI:30616"/>
        <dbReference type="ChEBI" id="CHEBI:43474"/>
        <dbReference type="ChEBI" id="CHEBI:57972"/>
        <dbReference type="ChEBI" id="CHEBI:70757"/>
        <dbReference type="ChEBI" id="CHEBI:83898"/>
        <dbReference type="ChEBI" id="CHEBI:456216"/>
        <dbReference type="EC" id="6.3.2.8"/>
    </reaction>
</comment>
<comment type="pathway">
    <text evidence="1">Cell wall biogenesis; peptidoglycan biosynthesis.</text>
</comment>
<comment type="subcellular location">
    <subcellularLocation>
        <location evidence="1">Cytoplasm</location>
    </subcellularLocation>
</comment>
<comment type="similarity">
    <text evidence="1">Belongs to the MurCDEF family.</text>
</comment>
<accession>A5G8J9</accession>
<sequence>MYGKIEKIHFVGIGGIGMSGIAEVLLNLGYKVSGSDLRKTEITERLEGLGGEIFIGHARENVANVDVVVISSAVHDDNPEVVEAMERLIPVIPRAEMLAELMRMKYGIAIAGTHGKTTTTSMVATILAKGGIDPTIVIGGRLNSIGTNARLGQGQFLVAEADESDGSFLKLSPTIAVVTNIDADHLDFYKDIDEIKDTFVQFINKVPFYGLAVLCLDNGNIADIIPLVKKRFNTYGLSTQADFRATDVRHTGFTTSFVAHYKGTLLGEITFSMPGAHNVLNALATIAVAMELNIPFAEIQAGFKAFGGVGRRFQVKGEVRDIMVVDDYGHHPTEIRATLAAAKGGWDRRLVVAFQPHRYSRTKELFEEFVKAFYDADILILTDIYPAGEKPIEGITAESLAARIKRHGQKDVTYIADRNAVCDHLLGIVKPGDIVITLGAGNIWQVGETLVEKLKGDL</sequence>
<dbReference type="EC" id="6.3.2.8" evidence="1"/>
<dbReference type="EMBL" id="CP000698">
    <property type="protein sequence ID" value="ABQ28117.1"/>
    <property type="molecule type" value="Genomic_DNA"/>
</dbReference>
<dbReference type="RefSeq" id="WP_011940754.1">
    <property type="nucleotide sequence ID" value="NC_009483.1"/>
</dbReference>
<dbReference type="SMR" id="A5G8J9"/>
<dbReference type="STRING" id="351605.Gura_3973"/>
<dbReference type="KEGG" id="gur:Gura_3973"/>
<dbReference type="HOGENOM" id="CLU_028104_2_2_7"/>
<dbReference type="OrthoDB" id="9804126at2"/>
<dbReference type="UniPathway" id="UPA00219"/>
<dbReference type="Proteomes" id="UP000006695">
    <property type="component" value="Chromosome"/>
</dbReference>
<dbReference type="GO" id="GO:0005737">
    <property type="term" value="C:cytoplasm"/>
    <property type="evidence" value="ECO:0007669"/>
    <property type="project" value="UniProtKB-SubCell"/>
</dbReference>
<dbReference type="GO" id="GO:0005524">
    <property type="term" value="F:ATP binding"/>
    <property type="evidence" value="ECO:0007669"/>
    <property type="project" value="UniProtKB-UniRule"/>
</dbReference>
<dbReference type="GO" id="GO:0008763">
    <property type="term" value="F:UDP-N-acetylmuramate-L-alanine ligase activity"/>
    <property type="evidence" value="ECO:0007669"/>
    <property type="project" value="UniProtKB-UniRule"/>
</dbReference>
<dbReference type="GO" id="GO:0051301">
    <property type="term" value="P:cell division"/>
    <property type="evidence" value="ECO:0007669"/>
    <property type="project" value="UniProtKB-KW"/>
</dbReference>
<dbReference type="GO" id="GO:0071555">
    <property type="term" value="P:cell wall organization"/>
    <property type="evidence" value="ECO:0007669"/>
    <property type="project" value="UniProtKB-KW"/>
</dbReference>
<dbReference type="GO" id="GO:0009252">
    <property type="term" value="P:peptidoglycan biosynthetic process"/>
    <property type="evidence" value="ECO:0007669"/>
    <property type="project" value="UniProtKB-UniRule"/>
</dbReference>
<dbReference type="GO" id="GO:0008360">
    <property type="term" value="P:regulation of cell shape"/>
    <property type="evidence" value="ECO:0007669"/>
    <property type="project" value="UniProtKB-KW"/>
</dbReference>
<dbReference type="Gene3D" id="3.90.190.20">
    <property type="entry name" value="Mur ligase, C-terminal domain"/>
    <property type="match status" value="1"/>
</dbReference>
<dbReference type="Gene3D" id="3.40.1190.10">
    <property type="entry name" value="Mur-like, catalytic domain"/>
    <property type="match status" value="1"/>
</dbReference>
<dbReference type="Gene3D" id="3.40.50.720">
    <property type="entry name" value="NAD(P)-binding Rossmann-like Domain"/>
    <property type="match status" value="1"/>
</dbReference>
<dbReference type="HAMAP" id="MF_00046">
    <property type="entry name" value="MurC"/>
    <property type="match status" value="1"/>
</dbReference>
<dbReference type="InterPro" id="IPR036565">
    <property type="entry name" value="Mur-like_cat_sf"/>
</dbReference>
<dbReference type="InterPro" id="IPR004101">
    <property type="entry name" value="Mur_ligase_C"/>
</dbReference>
<dbReference type="InterPro" id="IPR036615">
    <property type="entry name" value="Mur_ligase_C_dom_sf"/>
</dbReference>
<dbReference type="InterPro" id="IPR013221">
    <property type="entry name" value="Mur_ligase_cen"/>
</dbReference>
<dbReference type="InterPro" id="IPR000713">
    <property type="entry name" value="Mur_ligase_N"/>
</dbReference>
<dbReference type="InterPro" id="IPR050061">
    <property type="entry name" value="MurCDEF_pg_biosynth"/>
</dbReference>
<dbReference type="InterPro" id="IPR005758">
    <property type="entry name" value="UDP-N-AcMur_Ala_ligase_MurC"/>
</dbReference>
<dbReference type="NCBIfam" id="TIGR01082">
    <property type="entry name" value="murC"/>
    <property type="match status" value="1"/>
</dbReference>
<dbReference type="PANTHER" id="PTHR43445:SF3">
    <property type="entry name" value="UDP-N-ACETYLMURAMATE--L-ALANINE LIGASE"/>
    <property type="match status" value="1"/>
</dbReference>
<dbReference type="PANTHER" id="PTHR43445">
    <property type="entry name" value="UDP-N-ACETYLMURAMATE--L-ALANINE LIGASE-RELATED"/>
    <property type="match status" value="1"/>
</dbReference>
<dbReference type="Pfam" id="PF01225">
    <property type="entry name" value="Mur_ligase"/>
    <property type="match status" value="1"/>
</dbReference>
<dbReference type="Pfam" id="PF02875">
    <property type="entry name" value="Mur_ligase_C"/>
    <property type="match status" value="1"/>
</dbReference>
<dbReference type="Pfam" id="PF08245">
    <property type="entry name" value="Mur_ligase_M"/>
    <property type="match status" value="1"/>
</dbReference>
<dbReference type="SUPFAM" id="SSF51984">
    <property type="entry name" value="MurCD N-terminal domain"/>
    <property type="match status" value="1"/>
</dbReference>
<dbReference type="SUPFAM" id="SSF53623">
    <property type="entry name" value="MurD-like peptide ligases, catalytic domain"/>
    <property type="match status" value="1"/>
</dbReference>
<dbReference type="SUPFAM" id="SSF53244">
    <property type="entry name" value="MurD-like peptide ligases, peptide-binding domain"/>
    <property type="match status" value="1"/>
</dbReference>
<feature type="chain" id="PRO_1000074742" description="UDP-N-acetylmuramate--L-alanine ligase">
    <location>
        <begin position="1"/>
        <end position="458"/>
    </location>
</feature>
<feature type="binding site" evidence="1">
    <location>
        <begin position="112"/>
        <end position="118"/>
    </location>
    <ligand>
        <name>ATP</name>
        <dbReference type="ChEBI" id="CHEBI:30616"/>
    </ligand>
</feature>
<organism>
    <name type="scientific">Geotalea uraniireducens (strain Rf4)</name>
    <name type="common">Geobacter uraniireducens</name>
    <dbReference type="NCBI Taxonomy" id="351605"/>
    <lineage>
        <taxon>Bacteria</taxon>
        <taxon>Pseudomonadati</taxon>
        <taxon>Thermodesulfobacteriota</taxon>
        <taxon>Desulfuromonadia</taxon>
        <taxon>Geobacterales</taxon>
        <taxon>Geobacteraceae</taxon>
        <taxon>Geotalea</taxon>
    </lineage>
</organism>
<keyword id="KW-0067">ATP-binding</keyword>
<keyword id="KW-0131">Cell cycle</keyword>
<keyword id="KW-0132">Cell division</keyword>
<keyword id="KW-0133">Cell shape</keyword>
<keyword id="KW-0961">Cell wall biogenesis/degradation</keyword>
<keyword id="KW-0963">Cytoplasm</keyword>
<keyword id="KW-0436">Ligase</keyword>
<keyword id="KW-0547">Nucleotide-binding</keyword>
<keyword id="KW-0573">Peptidoglycan synthesis</keyword>
<keyword id="KW-1185">Reference proteome</keyword>
<gene>
    <name evidence="1" type="primary">murC</name>
    <name type="ordered locus">Gura_3973</name>
</gene>
<reference key="1">
    <citation type="submission" date="2007-05" db="EMBL/GenBank/DDBJ databases">
        <title>Complete sequence of Geobacter uraniireducens Rf4.</title>
        <authorList>
            <consortium name="US DOE Joint Genome Institute"/>
            <person name="Copeland A."/>
            <person name="Lucas S."/>
            <person name="Lapidus A."/>
            <person name="Barry K."/>
            <person name="Detter J.C."/>
            <person name="Glavina del Rio T."/>
            <person name="Hammon N."/>
            <person name="Israni S."/>
            <person name="Dalin E."/>
            <person name="Tice H."/>
            <person name="Pitluck S."/>
            <person name="Chertkov O."/>
            <person name="Brettin T."/>
            <person name="Bruce D."/>
            <person name="Han C."/>
            <person name="Schmutz J."/>
            <person name="Larimer F."/>
            <person name="Land M."/>
            <person name="Hauser L."/>
            <person name="Kyrpides N."/>
            <person name="Mikhailova N."/>
            <person name="Shelobolina E."/>
            <person name="Aklujkar M."/>
            <person name="Lovley D."/>
            <person name="Richardson P."/>
        </authorList>
    </citation>
    <scope>NUCLEOTIDE SEQUENCE [LARGE SCALE GENOMIC DNA]</scope>
    <source>
        <strain>ATCC BAA-1134 / JCM 13001 / Rf4</strain>
    </source>
</reference>
<evidence type="ECO:0000255" key="1">
    <source>
        <dbReference type="HAMAP-Rule" id="MF_00046"/>
    </source>
</evidence>
<name>MURC_GEOUR</name>
<proteinExistence type="inferred from homology"/>